<feature type="chain" id="PRO_0000225282" description="DNA-directed RNA polymerase subunit alpha">
    <location>
        <begin position="1"/>
        <end position="332"/>
    </location>
</feature>
<feature type="region of interest" description="Alpha N-terminal domain (alpha-NTD)" evidence="1">
    <location>
        <begin position="1"/>
        <end position="244"/>
    </location>
</feature>
<feature type="region of interest" description="Alpha C-terminal domain (alpha-CTD)" evidence="1">
    <location>
        <begin position="259"/>
        <end position="332"/>
    </location>
</feature>
<gene>
    <name evidence="1" type="primary">rpoA</name>
    <name type="ordered locus">MHJ_0164</name>
</gene>
<accession>Q4AAG6</accession>
<organism>
    <name type="scientific">Mesomycoplasma hyopneumoniae (strain J / ATCC 25934 / NCTC 10110)</name>
    <name type="common">Mycoplasma hyopneumoniae</name>
    <dbReference type="NCBI Taxonomy" id="262719"/>
    <lineage>
        <taxon>Bacteria</taxon>
        <taxon>Bacillati</taxon>
        <taxon>Mycoplasmatota</taxon>
        <taxon>Mycoplasmoidales</taxon>
        <taxon>Metamycoplasmataceae</taxon>
        <taxon>Mesomycoplasma</taxon>
    </lineage>
</organism>
<name>RPOA_MESHJ</name>
<protein>
    <recommendedName>
        <fullName evidence="1">DNA-directed RNA polymerase subunit alpha</fullName>
        <shortName evidence="1">RNAP subunit alpha</shortName>
        <ecNumber evidence="1">2.7.7.6</ecNumber>
    </recommendedName>
    <alternativeName>
        <fullName evidence="1">RNA polymerase subunit alpha</fullName>
    </alternativeName>
    <alternativeName>
        <fullName evidence="1">Transcriptase subunit alpha</fullName>
    </alternativeName>
</protein>
<keyword id="KW-0240">DNA-directed RNA polymerase</keyword>
<keyword id="KW-0548">Nucleotidyltransferase</keyword>
<keyword id="KW-0804">Transcription</keyword>
<keyword id="KW-0808">Transferase</keyword>
<proteinExistence type="inferred from homology"/>
<reference key="1">
    <citation type="journal article" date="2005" name="J. Bacteriol.">
        <title>Swine and poultry pathogens: the complete genome sequences of two strains of Mycoplasma hyopneumoniae and a strain of Mycoplasma synoviae.</title>
        <authorList>
            <person name="Vasconcelos A.T.R."/>
            <person name="Ferreira H.B."/>
            <person name="Bizarro C.V."/>
            <person name="Bonatto S.L."/>
            <person name="Carvalho M.O."/>
            <person name="Pinto P.M."/>
            <person name="Almeida D.F."/>
            <person name="Almeida L.G.P."/>
            <person name="Almeida R."/>
            <person name="Alves-Junior L."/>
            <person name="Assuncao E.N."/>
            <person name="Azevedo V.A.C."/>
            <person name="Bogo M.R."/>
            <person name="Brigido M.M."/>
            <person name="Brocchi M."/>
            <person name="Burity H.A."/>
            <person name="Camargo A.A."/>
            <person name="Camargo S.S."/>
            <person name="Carepo M.S."/>
            <person name="Carraro D.M."/>
            <person name="de Mattos Cascardo J.C."/>
            <person name="Castro L.A."/>
            <person name="Cavalcanti G."/>
            <person name="Chemale G."/>
            <person name="Collevatti R.G."/>
            <person name="Cunha C.W."/>
            <person name="Dallagiovanna B."/>
            <person name="Dambros B.P."/>
            <person name="Dellagostin O.A."/>
            <person name="Falcao C."/>
            <person name="Fantinatti-Garboggini F."/>
            <person name="Felipe M.S.S."/>
            <person name="Fiorentin L."/>
            <person name="Franco G.R."/>
            <person name="Freitas N.S.A."/>
            <person name="Frias D."/>
            <person name="Grangeiro T.B."/>
            <person name="Grisard E.C."/>
            <person name="Guimaraes C.T."/>
            <person name="Hungria M."/>
            <person name="Jardim S.N."/>
            <person name="Krieger M.A."/>
            <person name="Laurino J.P."/>
            <person name="Lima L.F.A."/>
            <person name="Lopes M.I."/>
            <person name="Loreto E.L.S."/>
            <person name="Madeira H.M.F."/>
            <person name="Manfio G.P."/>
            <person name="Maranhao A.Q."/>
            <person name="Martinkovics C.T."/>
            <person name="Medeiros S.R.B."/>
            <person name="Moreira M.A.M."/>
            <person name="Neiva M."/>
            <person name="Ramalho-Neto C.E."/>
            <person name="Nicolas M.F."/>
            <person name="Oliveira S.C."/>
            <person name="Paixao R.F.C."/>
            <person name="Pedrosa F.O."/>
            <person name="Pena S.D.J."/>
            <person name="Pereira M."/>
            <person name="Pereira-Ferrari L."/>
            <person name="Piffer I."/>
            <person name="Pinto L.S."/>
            <person name="Potrich D.P."/>
            <person name="Salim A.C.M."/>
            <person name="Santos F.R."/>
            <person name="Schmitt R."/>
            <person name="Schneider M.P.C."/>
            <person name="Schrank A."/>
            <person name="Schrank I.S."/>
            <person name="Schuck A.F."/>
            <person name="Seuanez H.N."/>
            <person name="Silva D.W."/>
            <person name="Silva R."/>
            <person name="Silva S.C."/>
            <person name="Soares C.M.A."/>
            <person name="Souza K.R.L."/>
            <person name="Souza R.C."/>
            <person name="Staats C.C."/>
            <person name="Steffens M.B.R."/>
            <person name="Teixeira S.M.R."/>
            <person name="Urmenyi T.P."/>
            <person name="Vainstein M.H."/>
            <person name="Zuccherato L.W."/>
            <person name="Simpson A.J.G."/>
            <person name="Zaha A."/>
        </authorList>
    </citation>
    <scope>NUCLEOTIDE SEQUENCE [LARGE SCALE GENOMIC DNA]</scope>
    <source>
        <strain>J / ATCC 25934 / NCTC 10110</strain>
    </source>
</reference>
<dbReference type="EC" id="2.7.7.6" evidence="1"/>
<dbReference type="EMBL" id="AE017243">
    <property type="protein sequence ID" value="AAZ44255.1"/>
    <property type="molecule type" value="Genomic_DNA"/>
</dbReference>
<dbReference type="RefSeq" id="WP_011206050.1">
    <property type="nucleotide sequence ID" value="NC_007295.1"/>
</dbReference>
<dbReference type="SMR" id="Q4AAG6"/>
<dbReference type="GeneID" id="41334467"/>
<dbReference type="KEGG" id="mhj:MHJ_0164"/>
<dbReference type="eggNOG" id="COG0202">
    <property type="taxonomic scope" value="Bacteria"/>
</dbReference>
<dbReference type="HOGENOM" id="CLU_053084_0_1_14"/>
<dbReference type="OrthoDB" id="9805706at2"/>
<dbReference type="Proteomes" id="UP000000548">
    <property type="component" value="Chromosome"/>
</dbReference>
<dbReference type="GO" id="GO:0005737">
    <property type="term" value="C:cytoplasm"/>
    <property type="evidence" value="ECO:0007669"/>
    <property type="project" value="UniProtKB-ARBA"/>
</dbReference>
<dbReference type="GO" id="GO:0000428">
    <property type="term" value="C:DNA-directed RNA polymerase complex"/>
    <property type="evidence" value="ECO:0007669"/>
    <property type="project" value="UniProtKB-KW"/>
</dbReference>
<dbReference type="GO" id="GO:0003677">
    <property type="term" value="F:DNA binding"/>
    <property type="evidence" value="ECO:0007669"/>
    <property type="project" value="UniProtKB-UniRule"/>
</dbReference>
<dbReference type="GO" id="GO:0003899">
    <property type="term" value="F:DNA-directed RNA polymerase activity"/>
    <property type="evidence" value="ECO:0007669"/>
    <property type="project" value="UniProtKB-UniRule"/>
</dbReference>
<dbReference type="GO" id="GO:0046983">
    <property type="term" value="F:protein dimerization activity"/>
    <property type="evidence" value="ECO:0007669"/>
    <property type="project" value="InterPro"/>
</dbReference>
<dbReference type="GO" id="GO:0006351">
    <property type="term" value="P:DNA-templated transcription"/>
    <property type="evidence" value="ECO:0007669"/>
    <property type="project" value="UniProtKB-UniRule"/>
</dbReference>
<dbReference type="CDD" id="cd06928">
    <property type="entry name" value="RNAP_alpha_NTD"/>
    <property type="match status" value="1"/>
</dbReference>
<dbReference type="Gene3D" id="1.10.150.20">
    <property type="entry name" value="5' to 3' exonuclease, C-terminal subdomain"/>
    <property type="match status" value="1"/>
</dbReference>
<dbReference type="Gene3D" id="2.170.120.12">
    <property type="entry name" value="DNA-directed RNA polymerase, insert domain"/>
    <property type="match status" value="1"/>
</dbReference>
<dbReference type="Gene3D" id="3.30.1360.10">
    <property type="entry name" value="RNA polymerase, RBP11-like subunit"/>
    <property type="match status" value="1"/>
</dbReference>
<dbReference type="HAMAP" id="MF_00059">
    <property type="entry name" value="RNApol_bact_RpoA"/>
    <property type="match status" value="1"/>
</dbReference>
<dbReference type="InterPro" id="IPR011262">
    <property type="entry name" value="DNA-dir_RNA_pol_insert"/>
</dbReference>
<dbReference type="InterPro" id="IPR011263">
    <property type="entry name" value="DNA-dir_RNA_pol_RpoA/D/Rpb3"/>
</dbReference>
<dbReference type="InterPro" id="IPR011773">
    <property type="entry name" value="DNA-dir_RpoA"/>
</dbReference>
<dbReference type="InterPro" id="IPR036603">
    <property type="entry name" value="RBP11-like"/>
</dbReference>
<dbReference type="InterPro" id="IPR011260">
    <property type="entry name" value="RNAP_asu_C"/>
</dbReference>
<dbReference type="InterPro" id="IPR036643">
    <property type="entry name" value="RNApol_insert_sf"/>
</dbReference>
<dbReference type="NCBIfam" id="NF003519">
    <property type="entry name" value="PRK05182.2-5"/>
    <property type="match status" value="1"/>
</dbReference>
<dbReference type="NCBIfam" id="TIGR02027">
    <property type="entry name" value="rpoA"/>
    <property type="match status" value="1"/>
</dbReference>
<dbReference type="Pfam" id="PF01000">
    <property type="entry name" value="RNA_pol_A_bac"/>
    <property type="match status" value="1"/>
</dbReference>
<dbReference type="Pfam" id="PF03118">
    <property type="entry name" value="RNA_pol_A_CTD"/>
    <property type="match status" value="1"/>
</dbReference>
<dbReference type="Pfam" id="PF01193">
    <property type="entry name" value="RNA_pol_L"/>
    <property type="match status" value="1"/>
</dbReference>
<dbReference type="SMART" id="SM00662">
    <property type="entry name" value="RPOLD"/>
    <property type="match status" value="1"/>
</dbReference>
<dbReference type="SUPFAM" id="SSF47789">
    <property type="entry name" value="C-terminal domain of RNA polymerase alpha subunit"/>
    <property type="match status" value="1"/>
</dbReference>
<dbReference type="SUPFAM" id="SSF56553">
    <property type="entry name" value="Insert subdomain of RNA polymerase alpha subunit"/>
    <property type="match status" value="1"/>
</dbReference>
<dbReference type="SUPFAM" id="SSF55257">
    <property type="entry name" value="RBP11-like subunits of RNA polymerase"/>
    <property type="match status" value="1"/>
</dbReference>
<comment type="function">
    <text evidence="1">DNA-dependent RNA polymerase catalyzes the transcription of DNA into RNA using the four ribonucleoside triphosphates as substrates.</text>
</comment>
<comment type="catalytic activity">
    <reaction evidence="1">
        <text>RNA(n) + a ribonucleoside 5'-triphosphate = RNA(n+1) + diphosphate</text>
        <dbReference type="Rhea" id="RHEA:21248"/>
        <dbReference type="Rhea" id="RHEA-COMP:14527"/>
        <dbReference type="Rhea" id="RHEA-COMP:17342"/>
        <dbReference type="ChEBI" id="CHEBI:33019"/>
        <dbReference type="ChEBI" id="CHEBI:61557"/>
        <dbReference type="ChEBI" id="CHEBI:140395"/>
        <dbReference type="EC" id="2.7.7.6"/>
    </reaction>
</comment>
<comment type="subunit">
    <text evidence="1">Homodimer. The RNAP catalytic core consists of 2 alpha, 1 beta, 1 beta' and 1 omega subunit. When a sigma factor is associated with the core the holoenzyme is formed, which can initiate transcription.</text>
</comment>
<comment type="domain">
    <text evidence="1">The N-terminal domain is essential for RNAP assembly and basal transcription, whereas the C-terminal domain is involved in interaction with transcriptional regulators and with upstream promoter elements.</text>
</comment>
<comment type="similarity">
    <text evidence="1">Belongs to the RNA polymerase alpha chain family.</text>
</comment>
<sequence length="332" mass="37330">MKKHAKVYYSENLVEQVNEFETSFEIKPLERGLGNTLGNALRRTVLSSIPSCAVFGVKIEGIKHEFTVLDDVIEDVVTILNNLKRVRFFYNPSVFSQNSIHVASFLGQKAGQIYARDIESHSGLKIVNPDLYIADVSKVGALKFELFITNGKGFVDFETNKKYVNEVISLLESQIEGSVLAVDSDFSPVLNANYQAVEINSASPIIEEKLNFSIKTDGSIFAKDALSQGAKILIAHLNLLADVENLNKFSADFFGDQEIKEEPIRRFSNSIDALDLSVRSLNALRRAQYYKISDIEKLSQDDFENIKNLGRKSVQEIMEKLQNYKNENKGEN</sequence>
<evidence type="ECO:0000255" key="1">
    <source>
        <dbReference type="HAMAP-Rule" id="MF_00059"/>
    </source>
</evidence>